<feature type="chain" id="PRO_0000415697" description="Outer envelope pore protein 16-2, chloroplastic">
    <location>
        <begin position="1"/>
        <end position="178"/>
    </location>
</feature>
<feature type="transmembrane region" description="Helical" evidence="2">
    <location>
        <begin position="103"/>
        <end position="119"/>
    </location>
</feature>
<feature type="region of interest" description="Contains beta strands" evidence="1">
    <location>
        <begin position="1"/>
        <end position="102"/>
    </location>
</feature>
<feature type="splice variant" id="VSP_042320" description="In isoform 2." evidence="6">
    <location>
        <begin position="59"/>
        <end position="60"/>
    </location>
</feature>
<name>OP162_ARATH</name>
<proteinExistence type="evidence at transcript level"/>
<gene>
    <name type="primary">OEP162</name>
    <name type="ordered locus">At4g16160</name>
    <name type="ORF">dl4120w</name>
    <name type="ORF">FCAALL.207</name>
</gene>
<reference key="1">
    <citation type="journal article" date="1998" name="Nature">
        <title>Analysis of 1.9 Mb of contiguous sequence from chromosome 4 of Arabidopsis thaliana.</title>
        <authorList>
            <person name="Bevan M."/>
            <person name="Bancroft I."/>
            <person name="Bent E."/>
            <person name="Love K."/>
            <person name="Goodman H.M."/>
            <person name="Dean C."/>
            <person name="Bergkamp R."/>
            <person name="Dirkse W."/>
            <person name="van Staveren M."/>
            <person name="Stiekema W."/>
            <person name="Drost L."/>
            <person name="Ridley P."/>
            <person name="Hudson S.-A."/>
            <person name="Patel K."/>
            <person name="Murphy G."/>
            <person name="Piffanelli P."/>
            <person name="Wedler H."/>
            <person name="Wedler E."/>
            <person name="Wambutt R."/>
            <person name="Weitzenegger T."/>
            <person name="Pohl T."/>
            <person name="Terryn N."/>
            <person name="Gielen J."/>
            <person name="Villarroel R."/>
            <person name="De Clercq R."/>
            <person name="van Montagu M."/>
            <person name="Lecharny A."/>
            <person name="Aubourg S."/>
            <person name="Gy I."/>
            <person name="Kreis M."/>
            <person name="Lao N."/>
            <person name="Kavanagh T."/>
            <person name="Hempel S."/>
            <person name="Kotter P."/>
            <person name="Entian K.-D."/>
            <person name="Rieger M."/>
            <person name="Schaefer M."/>
            <person name="Funk B."/>
            <person name="Mueller-Auer S."/>
            <person name="Silvey M."/>
            <person name="James R."/>
            <person name="Monfort A."/>
            <person name="Pons A."/>
            <person name="Puigdomenech P."/>
            <person name="Douka A."/>
            <person name="Voukelatou E."/>
            <person name="Milioni D."/>
            <person name="Hatzopoulos P."/>
            <person name="Piravandi E."/>
            <person name="Obermaier B."/>
            <person name="Hilbert H."/>
            <person name="Duesterhoeft A."/>
            <person name="Moores T."/>
            <person name="Jones J.D.G."/>
            <person name="Eneva T."/>
            <person name="Palme K."/>
            <person name="Benes V."/>
            <person name="Rechmann S."/>
            <person name="Ansorge W."/>
            <person name="Cooke R."/>
            <person name="Berger C."/>
            <person name="Delseny M."/>
            <person name="Voet M."/>
            <person name="Volckaert G."/>
            <person name="Mewes H.-W."/>
            <person name="Klosterman S."/>
            <person name="Schueller C."/>
            <person name="Chalwatzis N."/>
        </authorList>
    </citation>
    <scope>NUCLEOTIDE SEQUENCE [LARGE SCALE GENOMIC DNA]</scope>
    <source>
        <strain>cv. Columbia</strain>
    </source>
</reference>
<reference key="2">
    <citation type="journal article" date="1999" name="Nature">
        <title>Sequence and analysis of chromosome 4 of the plant Arabidopsis thaliana.</title>
        <authorList>
            <person name="Mayer K.F.X."/>
            <person name="Schueller C."/>
            <person name="Wambutt R."/>
            <person name="Murphy G."/>
            <person name="Volckaert G."/>
            <person name="Pohl T."/>
            <person name="Duesterhoeft A."/>
            <person name="Stiekema W."/>
            <person name="Entian K.-D."/>
            <person name="Terryn N."/>
            <person name="Harris B."/>
            <person name="Ansorge W."/>
            <person name="Brandt P."/>
            <person name="Grivell L.A."/>
            <person name="Rieger M."/>
            <person name="Weichselgartner M."/>
            <person name="de Simone V."/>
            <person name="Obermaier B."/>
            <person name="Mache R."/>
            <person name="Mueller M."/>
            <person name="Kreis M."/>
            <person name="Delseny M."/>
            <person name="Puigdomenech P."/>
            <person name="Watson M."/>
            <person name="Schmidtheini T."/>
            <person name="Reichert B."/>
            <person name="Portetelle D."/>
            <person name="Perez-Alonso M."/>
            <person name="Boutry M."/>
            <person name="Bancroft I."/>
            <person name="Vos P."/>
            <person name="Hoheisel J."/>
            <person name="Zimmermann W."/>
            <person name="Wedler H."/>
            <person name="Ridley P."/>
            <person name="Langham S.-A."/>
            <person name="McCullagh B."/>
            <person name="Bilham L."/>
            <person name="Robben J."/>
            <person name="van der Schueren J."/>
            <person name="Grymonprez B."/>
            <person name="Chuang Y.-J."/>
            <person name="Vandenbussche F."/>
            <person name="Braeken M."/>
            <person name="Weltjens I."/>
            <person name="Voet M."/>
            <person name="Bastiaens I."/>
            <person name="Aert R."/>
            <person name="Defoor E."/>
            <person name="Weitzenegger T."/>
            <person name="Bothe G."/>
            <person name="Ramsperger U."/>
            <person name="Hilbert H."/>
            <person name="Braun M."/>
            <person name="Holzer E."/>
            <person name="Brandt A."/>
            <person name="Peters S."/>
            <person name="van Staveren M."/>
            <person name="Dirkse W."/>
            <person name="Mooijman P."/>
            <person name="Klein Lankhorst R."/>
            <person name="Rose M."/>
            <person name="Hauf J."/>
            <person name="Koetter P."/>
            <person name="Berneiser S."/>
            <person name="Hempel S."/>
            <person name="Feldpausch M."/>
            <person name="Lamberth S."/>
            <person name="Van den Daele H."/>
            <person name="De Keyser A."/>
            <person name="Buysshaert C."/>
            <person name="Gielen J."/>
            <person name="Villarroel R."/>
            <person name="De Clercq R."/>
            <person name="van Montagu M."/>
            <person name="Rogers J."/>
            <person name="Cronin A."/>
            <person name="Quail M.A."/>
            <person name="Bray-Allen S."/>
            <person name="Clark L."/>
            <person name="Doggett J."/>
            <person name="Hall S."/>
            <person name="Kay M."/>
            <person name="Lennard N."/>
            <person name="McLay K."/>
            <person name="Mayes R."/>
            <person name="Pettett A."/>
            <person name="Rajandream M.A."/>
            <person name="Lyne M."/>
            <person name="Benes V."/>
            <person name="Rechmann S."/>
            <person name="Borkova D."/>
            <person name="Bloecker H."/>
            <person name="Scharfe M."/>
            <person name="Grimm M."/>
            <person name="Loehnert T.-H."/>
            <person name="Dose S."/>
            <person name="de Haan M."/>
            <person name="Maarse A.C."/>
            <person name="Schaefer M."/>
            <person name="Mueller-Auer S."/>
            <person name="Gabel C."/>
            <person name="Fuchs M."/>
            <person name="Fartmann B."/>
            <person name="Granderath K."/>
            <person name="Dauner D."/>
            <person name="Herzl A."/>
            <person name="Neumann S."/>
            <person name="Argiriou A."/>
            <person name="Vitale D."/>
            <person name="Liguori R."/>
            <person name="Piravandi E."/>
            <person name="Massenet O."/>
            <person name="Quigley F."/>
            <person name="Clabauld G."/>
            <person name="Muendlein A."/>
            <person name="Felber R."/>
            <person name="Schnabl S."/>
            <person name="Hiller R."/>
            <person name="Schmidt W."/>
            <person name="Lecharny A."/>
            <person name="Aubourg S."/>
            <person name="Chefdor F."/>
            <person name="Cooke R."/>
            <person name="Berger C."/>
            <person name="Monfort A."/>
            <person name="Casacuberta E."/>
            <person name="Gibbons T."/>
            <person name="Weber N."/>
            <person name="Vandenbol M."/>
            <person name="Bargues M."/>
            <person name="Terol J."/>
            <person name="Torres A."/>
            <person name="Perez-Perez A."/>
            <person name="Purnelle B."/>
            <person name="Bent E."/>
            <person name="Johnson S."/>
            <person name="Tacon D."/>
            <person name="Jesse T."/>
            <person name="Heijnen L."/>
            <person name="Schwarz S."/>
            <person name="Scholler P."/>
            <person name="Heber S."/>
            <person name="Francs P."/>
            <person name="Bielke C."/>
            <person name="Frishman D."/>
            <person name="Haase D."/>
            <person name="Lemcke K."/>
            <person name="Mewes H.-W."/>
            <person name="Stocker S."/>
            <person name="Zaccaria P."/>
            <person name="Bevan M."/>
            <person name="Wilson R.K."/>
            <person name="de la Bastide M."/>
            <person name="Habermann K."/>
            <person name="Parnell L."/>
            <person name="Dedhia N."/>
            <person name="Gnoj L."/>
            <person name="Schutz K."/>
            <person name="Huang E."/>
            <person name="Spiegel L."/>
            <person name="Sekhon M."/>
            <person name="Murray J."/>
            <person name="Sheet P."/>
            <person name="Cordes M."/>
            <person name="Abu-Threideh J."/>
            <person name="Stoneking T."/>
            <person name="Kalicki J."/>
            <person name="Graves T."/>
            <person name="Harmon G."/>
            <person name="Edwards J."/>
            <person name="Latreille P."/>
            <person name="Courtney L."/>
            <person name="Cloud J."/>
            <person name="Abbott A."/>
            <person name="Scott K."/>
            <person name="Johnson D."/>
            <person name="Minx P."/>
            <person name="Bentley D."/>
            <person name="Fulton B."/>
            <person name="Miller N."/>
            <person name="Greco T."/>
            <person name="Kemp K."/>
            <person name="Kramer J."/>
            <person name="Fulton L."/>
            <person name="Mardis E."/>
            <person name="Dante M."/>
            <person name="Pepin K."/>
            <person name="Hillier L.W."/>
            <person name="Nelson J."/>
            <person name="Spieth J."/>
            <person name="Ryan E."/>
            <person name="Andrews S."/>
            <person name="Geisel C."/>
            <person name="Layman D."/>
            <person name="Du H."/>
            <person name="Ali J."/>
            <person name="Berghoff A."/>
            <person name="Jones K."/>
            <person name="Drone K."/>
            <person name="Cotton M."/>
            <person name="Joshu C."/>
            <person name="Antonoiu B."/>
            <person name="Zidanic M."/>
            <person name="Strong C."/>
            <person name="Sun H."/>
            <person name="Lamar B."/>
            <person name="Yordan C."/>
            <person name="Ma P."/>
            <person name="Zhong J."/>
            <person name="Preston R."/>
            <person name="Vil D."/>
            <person name="Shekher M."/>
            <person name="Matero A."/>
            <person name="Shah R."/>
            <person name="Swaby I.K."/>
            <person name="O'Shaughnessy A."/>
            <person name="Rodriguez M."/>
            <person name="Hoffman J."/>
            <person name="Till S."/>
            <person name="Granat S."/>
            <person name="Shohdy N."/>
            <person name="Hasegawa A."/>
            <person name="Hameed A."/>
            <person name="Lodhi M."/>
            <person name="Johnson A."/>
            <person name="Chen E."/>
            <person name="Marra M.A."/>
            <person name="Martienssen R."/>
            <person name="McCombie W.R."/>
        </authorList>
    </citation>
    <scope>NUCLEOTIDE SEQUENCE [LARGE SCALE GENOMIC DNA]</scope>
    <source>
        <strain>cv. Columbia</strain>
    </source>
</reference>
<reference key="3">
    <citation type="journal article" date="2017" name="Plant J.">
        <title>Araport11: a complete reannotation of the Arabidopsis thaliana reference genome.</title>
        <authorList>
            <person name="Cheng C.Y."/>
            <person name="Krishnakumar V."/>
            <person name="Chan A.P."/>
            <person name="Thibaud-Nissen F."/>
            <person name="Schobel S."/>
            <person name="Town C.D."/>
        </authorList>
    </citation>
    <scope>GENOME REANNOTATION</scope>
    <source>
        <strain>cv. Columbia</strain>
    </source>
</reference>
<reference key="4">
    <citation type="submission" date="2006-07" db="EMBL/GenBank/DDBJ databases">
        <title>Large-scale analysis of RIKEN Arabidopsis full-length (RAFL) cDNAs.</title>
        <authorList>
            <person name="Totoki Y."/>
            <person name="Seki M."/>
            <person name="Ishida J."/>
            <person name="Nakajima M."/>
            <person name="Enju A."/>
            <person name="Kamiya A."/>
            <person name="Narusaka M."/>
            <person name="Shin-i T."/>
            <person name="Nakagawa M."/>
            <person name="Sakamoto N."/>
            <person name="Oishi K."/>
            <person name="Kohara Y."/>
            <person name="Kobayashi M."/>
            <person name="Toyoda A."/>
            <person name="Sakaki Y."/>
            <person name="Sakurai T."/>
            <person name="Iida K."/>
            <person name="Akiyama K."/>
            <person name="Satou M."/>
            <person name="Toyoda T."/>
            <person name="Konagaya A."/>
            <person name="Carninci P."/>
            <person name="Kawai J."/>
            <person name="Hayashizaki Y."/>
            <person name="Shinozaki K."/>
        </authorList>
    </citation>
    <scope>NUCLEOTIDE SEQUENCE [LARGE SCALE MRNA] (ISOFORM 1)</scope>
    <source>
        <strain>cv. Columbia</strain>
    </source>
</reference>
<reference key="5">
    <citation type="submission" date="2002-03" db="EMBL/GenBank/DDBJ databases">
        <title>Full-length cDNA from Arabidopsis thaliana.</title>
        <authorList>
            <person name="Brover V.V."/>
            <person name="Troukhan M.E."/>
            <person name="Alexandrov N.A."/>
            <person name="Lu Y.-P."/>
            <person name="Flavell R.B."/>
            <person name="Feldmann K.A."/>
        </authorList>
    </citation>
    <scope>NUCLEOTIDE SEQUENCE [LARGE SCALE MRNA] (ISOFORM 2)</scope>
</reference>
<reference key="6">
    <citation type="journal article" date="2003" name="Protein Sci.">
        <title>Prediction of the plant beta-barrel proteome: a case study of the chloroplast outer envelope.</title>
        <authorList>
            <person name="Schleiff E."/>
            <person name="Eichacker L.A."/>
            <person name="Eckart K."/>
            <person name="Becker T."/>
            <person name="Mirus O."/>
            <person name="Stahl T."/>
            <person name="Soll J."/>
        </authorList>
    </citation>
    <scope>GENE FAMILY</scope>
</reference>
<reference key="7">
    <citation type="journal article" date="2006" name="Plant J.">
        <title>Gene duplication, exon gain and neofunctionalization of OEP16-related genes in land plants.</title>
        <authorList>
            <person name="Drea S.C."/>
            <person name="Lao N.T."/>
            <person name="Wolfe K.H."/>
            <person name="Kavanagh T.A."/>
        </authorList>
    </citation>
    <scope>INDUCTION</scope>
    <scope>TISSUE SPECIFICITY</scope>
    <scope>DEVELOPMENTAL STAGE</scope>
</reference>
<reference key="8">
    <citation type="journal article" date="2007" name="Plant Physiol.">
        <title>Characterization of the preprotein and amino acid transporter gene family in Arabidopsis.</title>
        <authorList>
            <person name="Murcha M.W."/>
            <person name="Elhafez D."/>
            <person name="Lister R."/>
            <person name="Tonti-Filippini J."/>
            <person name="Baumgartner M."/>
            <person name="Philippar K."/>
            <person name="Carrie C."/>
            <person name="Mokranjac D."/>
            <person name="Soll J."/>
            <person name="Whelan J."/>
        </authorList>
    </citation>
    <scope>SUBCELLULAR LOCATION</scope>
    <scope>REVIEW</scope>
</reference>
<reference key="9">
    <citation type="journal article" date="2007" name="Proc. Natl. Acad. Sci. U.S.A.">
        <title>Chloroplast biogenesis: the use of mutants to study the etioplast-chloroplast transition.</title>
        <authorList>
            <person name="Philippar K."/>
            <person name="Geis T."/>
            <person name="Ilkavets I."/>
            <person name="Oster U."/>
            <person name="Schwenkert S."/>
            <person name="Meurer J."/>
            <person name="Soll J."/>
        </authorList>
    </citation>
    <scope>FUNCTION</scope>
    <scope>SUBCELLULAR LOCATION</scope>
    <scope>TISSUE SPECIFICITY</scope>
    <scope>GENE FAMILY</scope>
</reference>
<protein>
    <recommendedName>
        <fullName>Outer envelope pore protein 16-2, chloroplastic</fullName>
    </recommendedName>
    <alternativeName>
        <fullName>Chloroplastic outer envelope pore protein of 16 kDa 2</fullName>
        <shortName>AtOEP16-2</shortName>
        <shortName>OEP16-2</shortName>
    </alternativeName>
    <alternativeName>
        <fullName>Outer plastid envelope protein 16-S</fullName>
        <shortName>AtOEP16-S</shortName>
        <shortName>Seeds outer plastid envelope protein 16</shortName>
    </alternativeName>
</protein>
<accession>Q0WMZ5</accession>
<accession>O23464</accession>
<accession>Q8L9N5</accession>
<organism>
    <name type="scientific">Arabidopsis thaliana</name>
    <name type="common">Mouse-ear cress</name>
    <dbReference type="NCBI Taxonomy" id="3702"/>
    <lineage>
        <taxon>Eukaryota</taxon>
        <taxon>Viridiplantae</taxon>
        <taxon>Streptophyta</taxon>
        <taxon>Embryophyta</taxon>
        <taxon>Tracheophyta</taxon>
        <taxon>Spermatophyta</taxon>
        <taxon>Magnoliopsida</taxon>
        <taxon>eudicotyledons</taxon>
        <taxon>Gunneridae</taxon>
        <taxon>Pentapetalae</taxon>
        <taxon>rosids</taxon>
        <taxon>malvids</taxon>
        <taxon>Brassicales</taxon>
        <taxon>Brassicaceae</taxon>
        <taxon>Camelineae</taxon>
        <taxon>Arabidopsis</taxon>
    </lineage>
</organism>
<sequence>MEKSGGRIVMDEIRSFEKAHLFDLGHPLLNRIADSFVKAAGVGALQAVSREAYFTVVDGAGFDSNNVGPPSEITGNKKHRFPNLRGESSKSLDALVKNTGKESLQWGLAAGLYSGITYGMTEVRGGAHDWRNSAVAGALTGAAMAMTTSERTSHEQVVQSALTGAAISTAANLLSSVF</sequence>
<evidence type="ECO:0000250" key="1"/>
<evidence type="ECO:0000255" key="2"/>
<evidence type="ECO:0000269" key="3">
    <source>
    </source>
</evidence>
<evidence type="ECO:0000269" key="4">
    <source>
    </source>
</evidence>
<evidence type="ECO:0000269" key="5">
    <source>
    </source>
</evidence>
<evidence type="ECO:0000303" key="6">
    <source ref="5"/>
</evidence>
<evidence type="ECO:0000305" key="7"/>
<comment type="function">
    <text evidence="1 5">Voltage-dependent high-conductance channel with a slight cation-selectivity; selective for amino acids but excludes triosephosphates or uncharged sugars (By similarity). Non-essential amino acid-selective channel protein and translocation pore for NADPH:protochlorophyllide oxidoreductase A (PORA) and possibly PORB.</text>
</comment>
<comment type="subunit">
    <text evidence="1">Homodimer and oligomers in membrane.</text>
</comment>
<comment type="subcellular location">
    <subcellularLocation>
        <location evidence="4 5">Plastid</location>
        <location evidence="4 5">Chloroplast outer membrane</location>
        <topology evidence="4 5">Multi-pass membrane protein</topology>
    </subcellularLocation>
</comment>
<comment type="alternative products">
    <event type="alternative splicing"/>
    <isoform>
        <id>Q0WMZ5-1</id>
        <name>1</name>
        <sequence type="displayed"/>
    </isoform>
    <isoform>
        <id>Q0WMZ5-2</id>
        <name>2</name>
        <sequence type="described" ref="VSP_042320"/>
    </isoform>
</comment>
<comment type="tissue specificity">
    <text evidence="3 5">Detected in pollen and seeds. Present in leaves and cotyledons.</text>
</comment>
<comment type="developmental stage">
    <text evidence="3">Strongly expressed during the maturation phase in seeds and pollen grains, both desiccation-tolerant tissues.</text>
</comment>
<comment type="induction">
    <text evidence="3">Regulated by ABI3 and ABI5.</text>
</comment>
<comment type="similarity">
    <text evidence="7">Belongs to the Tim17/Tim22/Tim23 family. Plastid outer envelope porin OEP16 (TC 1.B.30) subfamily.</text>
</comment>
<comment type="sequence caution" evidence="7">
    <conflict type="erroneous gene model prediction">
        <sequence resource="EMBL-CDS" id="CAB10395"/>
    </conflict>
</comment>
<comment type="sequence caution" evidence="7">
    <conflict type="erroneous gene model prediction">
        <sequence resource="EMBL-CDS" id="CAB78658"/>
    </conflict>
</comment>
<dbReference type="EMBL" id="Z97340">
    <property type="protein sequence ID" value="CAB10395.1"/>
    <property type="status" value="ALT_SEQ"/>
    <property type="molecule type" value="Genomic_DNA"/>
</dbReference>
<dbReference type="EMBL" id="AL161543">
    <property type="protein sequence ID" value="CAB78658.1"/>
    <property type="status" value="ALT_SEQ"/>
    <property type="molecule type" value="Genomic_DNA"/>
</dbReference>
<dbReference type="EMBL" id="CP002687">
    <property type="protein sequence ID" value="AEE83705.1"/>
    <property type="molecule type" value="Genomic_DNA"/>
</dbReference>
<dbReference type="EMBL" id="CP002687">
    <property type="protein sequence ID" value="AEE83706.1"/>
    <property type="molecule type" value="Genomic_DNA"/>
</dbReference>
<dbReference type="EMBL" id="AK229661">
    <property type="protein sequence ID" value="BAF01505.1"/>
    <property type="molecule type" value="mRNA"/>
</dbReference>
<dbReference type="EMBL" id="AY088334">
    <property type="protein sequence ID" value="AAM65873.1"/>
    <property type="molecule type" value="mRNA"/>
</dbReference>
<dbReference type="PIR" id="A71428">
    <property type="entry name" value="A71428"/>
</dbReference>
<dbReference type="RefSeq" id="NP_567488.1">
    <molecule id="Q0WMZ5-2"/>
    <property type="nucleotide sequence ID" value="NM_117712.2"/>
</dbReference>
<dbReference type="RefSeq" id="NP_849394.1">
    <molecule id="Q0WMZ5-1"/>
    <property type="nucleotide sequence ID" value="NM_179063.2"/>
</dbReference>
<dbReference type="FunCoup" id="Q0WMZ5">
    <property type="interactions" value="45"/>
</dbReference>
<dbReference type="STRING" id="3702.Q0WMZ5"/>
<dbReference type="TCDB" id="1.B.30.1.2">
    <property type="family name" value="the plastid outer envelope porin of 16 kda (oep16) family"/>
</dbReference>
<dbReference type="PaxDb" id="3702-AT4G16160.2"/>
<dbReference type="ProMEX" id="Q0WMZ5"/>
<dbReference type="ProteomicsDB" id="248896">
    <molecule id="Q0WMZ5-1"/>
</dbReference>
<dbReference type="DNASU" id="827308"/>
<dbReference type="EnsemblPlants" id="AT4G16160.1">
    <molecule id="Q0WMZ5-2"/>
    <property type="protein sequence ID" value="AT4G16160.1"/>
    <property type="gene ID" value="AT4G16160"/>
</dbReference>
<dbReference type="EnsemblPlants" id="AT4G16160.2">
    <molecule id="Q0WMZ5-1"/>
    <property type="protein sequence ID" value="AT4G16160.2"/>
    <property type="gene ID" value="AT4G16160"/>
</dbReference>
<dbReference type="GeneID" id="827308"/>
<dbReference type="Gramene" id="AT4G16160.1">
    <molecule id="Q0WMZ5-2"/>
    <property type="protein sequence ID" value="AT4G16160.1"/>
    <property type="gene ID" value="AT4G16160"/>
</dbReference>
<dbReference type="Gramene" id="AT4G16160.2">
    <molecule id="Q0WMZ5-1"/>
    <property type="protein sequence ID" value="AT4G16160.2"/>
    <property type="gene ID" value="AT4G16160"/>
</dbReference>
<dbReference type="KEGG" id="ath:AT4G16160"/>
<dbReference type="Araport" id="AT4G16160"/>
<dbReference type="TAIR" id="AT4G16160">
    <property type="gene designation" value="ATOEP16-2"/>
</dbReference>
<dbReference type="eggNOG" id="ENOG502RY7Z">
    <property type="taxonomic scope" value="Eukaryota"/>
</dbReference>
<dbReference type="InParanoid" id="Q0WMZ5"/>
<dbReference type="OMA" id="HIVQCAI"/>
<dbReference type="OrthoDB" id="1913857at2759"/>
<dbReference type="PhylomeDB" id="Q0WMZ5"/>
<dbReference type="PRO" id="PR:Q0WMZ5"/>
<dbReference type="Proteomes" id="UP000006548">
    <property type="component" value="Chromosome 4"/>
</dbReference>
<dbReference type="ExpressionAtlas" id="Q0WMZ5">
    <property type="expression patterns" value="baseline and differential"/>
</dbReference>
<dbReference type="GO" id="GO:0009707">
    <property type="term" value="C:chloroplast outer membrane"/>
    <property type="evidence" value="ECO:0007669"/>
    <property type="project" value="UniProtKB-SubCell"/>
</dbReference>
<dbReference type="GO" id="GO:0009527">
    <property type="term" value="C:plastid outer membrane"/>
    <property type="evidence" value="ECO:0000250"/>
    <property type="project" value="TAIR"/>
</dbReference>
<dbReference type="GO" id="GO:0046930">
    <property type="term" value="C:pore complex"/>
    <property type="evidence" value="ECO:0007669"/>
    <property type="project" value="UniProtKB-KW"/>
</dbReference>
<dbReference type="GO" id="GO:0015171">
    <property type="term" value="F:amino acid transmembrane transporter activity"/>
    <property type="evidence" value="ECO:0000315"/>
    <property type="project" value="TAIR"/>
</dbReference>
<dbReference type="GO" id="GO:0015288">
    <property type="term" value="F:porin activity"/>
    <property type="evidence" value="ECO:0007669"/>
    <property type="project" value="UniProtKB-KW"/>
</dbReference>
<dbReference type="GO" id="GO:0042803">
    <property type="term" value="F:protein homodimerization activity"/>
    <property type="evidence" value="ECO:0000250"/>
    <property type="project" value="UniProtKB"/>
</dbReference>
<dbReference type="GO" id="GO:0006811">
    <property type="term" value="P:monoatomic ion transport"/>
    <property type="evidence" value="ECO:0007669"/>
    <property type="project" value="UniProtKB-KW"/>
</dbReference>
<dbReference type="InterPro" id="IPR045238">
    <property type="entry name" value="Tim23-like"/>
</dbReference>
<dbReference type="PANTHER" id="PTHR15371:SF1">
    <property type="entry name" value="OUTER ENVELOPE PORE PROTEIN 16-2, CHLOROPLASTIC"/>
    <property type="match status" value="1"/>
</dbReference>
<dbReference type="PANTHER" id="PTHR15371">
    <property type="entry name" value="TIM23"/>
    <property type="match status" value="1"/>
</dbReference>
<dbReference type="Pfam" id="PF02466">
    <property type="entry name" value="Tim17"/>
    <property type="match status" value="1"/>
</dbReference>
<keyword id="KW-0025">Alternative splicing</keyword>
<keyword id="KW-0150">Chloroplast</keyword>
<keyword id="KW-0406">Ion transport</keyword>
<keyword id="KW-0472">Membrane</keyword>
<keyword id="KW-0934">Plastid</keyword>
<keyword id="KW-1002">Plastid outer membrane</keyword>
<keyword id="KW-0626">Porin</keyword>
<keyword id="KW-1185">Reference proteome</keyword>
<keyword id="KW-0812">Transmembrane</keyword>
<keyword id="KW-1134">Transmembrane beta strand</keyword>
<keyword id="KW-1133">Transmembrane helix</keyword>
<keyword id="KW-0813">Transport</keyword>